<feature type="chain" id="PRO_0000154952" description="G protein-activated inward rectifier potassium channel 3">
    <location>
        <begin position="1"/>
        <end position="393"/>
    </location>
</feature>
<feature type="topological domain" description="Cytoplasmic" evidence="1">
    <location>
        <begin position="1"/>
        <end position="57"/>
    </location>
</feature>
<feature type="transmembrane region" description="Helical; Name=M1" evidence="1">
    <location>
        <begin position="58"/>
        <end position="82"/>
    </location>
</feature>
<feature type="topological domain" description="Extracellular" evidence="1">
    <location>
        <begin position="83"/>
        <end position="106"/>
    </location>
</feature>
<feature type="intramembrane region" description="Helical; Pore-forming; Name=H5" evidence="1">
    <location>
        <begin position="107"/>
        <end position="118"/>
    </location>
</feature>
<feature type="intramembrane region" description="Pore-forming" evidence="1">
    <location>
        <begin position="119"/>
        <end position="125"/>
    </location>
</feature>
<feature type="topological domain" description="Extracellular" evidence="1">
    <location>
        <begin position="126"/>
        <end position="134"/>
    </location>
</feature>
<feature type="transmembrane region" description="Helical; Name=M2" evidence="1">
    <location>
        <begin position="135"/>
        <end position="156"/>
    </location>
</feature>
<feature type="topological domain" description="Cytoplasmic" evidence="1">
    <location>
        <begin position="157"/>
        <end position="393"/>
    </location>
</feature>
<feature type="region of interest" description="Disordered" evidence="5">
    <location>
        <begin position="1"/>
        <end position="23"/>
    </location>
</feature>
<feature type="region of interest" description="Disordered" evidence="5">
    <location>
        <begin position="360"/>
        <end position="393"/>
    </location>
</feature>
<feature type="short sequence motif" description="Selectivity filter" evidence="1">
    <location>
        <begin position="120"/>
        <end position="125"/>
    </location>
</feature>
<feature type="short sequence motif" description="PDZ-binding">
    <location>
        <begin position="390"/>
        <end position="393"/>
    </location>
</feature>
<feature type="compositionally biased region" description="Pro residues" evidence="5">
    <location>
        <begin position="384"/>
        <end position="393"/>
    </location>
</feature>
<feature type="site" description="Role in the control of polyamine-mediated channel gating and in the blocking by intracellular magnesium" evidence="1">
    <location>
        <position position="150"/>
    </location>
</feature>
<feature type="mutagenesis site" description="Abolishes interaction with SNX27." evidence="7">
    <original>ES</original>
    <variation>RR</variation>
    <variation>RS</variation>
    <location>
        <begin position="388"/>
        <end position="389"/>
    </location>
</feature>
<feature type="mutagenesis site" description="Abolishes interaction with SNX27." evidence="6">
    <location>
        <begin position="390"/>
        <end position="393"/>
    </location>
</feature>
<feature type="mutagenesis site" description="Abolishes interaction with SNX27." evidence="6">
    <original>K</original>
    <variation>D</variation>
    <location>
        <position position="392"/>
    </location>
</feature>
<feature type="mutagenesis site" description="Does not affect interaction with SNX27." evidence="6">
    <original>K</original>
    <variation>E</variation>
    <location>
        <position position="392"/>
    </location>
</feature>
<feature type="mutagenesis site" description="Abolishes interaction with SNX27." evidence="6">
    <original>V</original>
    <variation>I</variation>
    <location>
        <position position="393"/>
    </location>
</feature>
<feature type="strand" evidence="10">
    <location>
        <begin position="389"/>
        <end position="392"/>
    </location>
</feature>
<protein>
    <recommendedName>
        <fullName>G protein-activated inward rectifier potassium channel 3</fullName>
        <shortName>GIRK-3</shortName>
    </recommendedName>
    <alternativeName>
        <fullName>Inward rectifier K(+) channel Kir3.3</fullName>
    </alternativeName>
    <alternativeName>
        <fullName>Potassium channel, inwardly rectifying subfamily J member 9</fullName>
    </alternativeName>
</protein>
<keyword id="KW-0002">3D-structure</keyword>
<keyword id="KW-0407">Ion channel</keyword>
<keyword id="KW-0406">Ion transport</keyword>
<keyword id="KW-0472">Membrane</keyword>
<keyword id="KW-0630">Potassium</keyword>
<keyword id="KW-0633">Potassium transport</keyword>
<keyword id="KW-1185">Reference proteome</keyword>
<keyword id="KW-0812">Transmembrane</keyword>
<keyword id="KW-1133">Transmembrane helix</keyword>
<keyword id="KW-0813">Transport</keyword>
<keyword id="KW-0851">Voltage-gated channel</keyword>
<gene>
    <name type="primary">Kcnj9</name>
    <name type="synonym">Girk3</name>
</gene>
<evidence type="ECO:0000250" key="1"/>
<evidence type="ECO:0000250" key="2">
    <source>
        <dbReference type="UniProtKB" id="P48543"/>
    </source>
</evidence>
<evidence type="ECO:0000250" key="3">
    <source>
        <dbReference type="UniProtKB" id="P63251"/>
    </source>
</evidence>
<evidence type="ECO:0000255" key="4"/>
<evidence type="ECO:0000256" key="5">
    <source>
        <dbReference type="SAM" id="MobiDB-lite"/>
    </source>
</evidence>
<evidence type="ECO:0000269" key="6">
    <source>
    </source>
</evidence>
<evidence type="ECO:0000269" key="7">
    <source>
    </source>
</evidence>
<evidence type="ECO:0000269" key="8">
    <source>
    </source>
</evidence>
<evidence type="ECO:0000305" key="9"/>
<evidence type="ECO:0007829" key="10">
    <source>
        <dbReference type="PDB" id="3QGL"/>
    </source>
</evidence>
<organism>
    <name type="scientific">Rattus norvegicus</name>
    <name type="common">Rat</name>
    <dbReference type="NCBI Taxonomy" id="10116"/>
    <lineage>
        <taxon>Eukaryota</taxon>
        <taxon>Metazoa</taxon>
        <taxon>Chordata</taxon>
        <taxon>Craniata</taxon>
        <taxon>Vertebrata</taxon>
        <taxon>Euteleostomi</taxon>
        <taxon>Mammalia</taxon>
        <taxon>Eutheria</taxon>
        <taxon>Euarchontoglires</taxon>
        <taxon>Glires</taxon>
        <taxon>Rodentia</taxon>
        <taxon>Myomorpha</taxon>
        <taxon>Muroidea</taxon>
        <taxon>Muridae</taxon>
        <taxon>Murinae</taxon>
        <taxon>Rattus</taxon>
    </lineage>
</organism>
<proteinExistence type="evidence at protein level"/>
<accession>Q63511</accession>
<reference key="1">
    <citation type="journal article" date="1996" name="Biochem. Biophys. Res. Commun.">
        <title>Functional expression and cellular mRNA localization of a G protein-activated K+ inward rectifier isolated from rat brain.</title>
        <authorList>
            <person name="Dissmann E."/>
            <person name="Wischmeyer E."/>
            <person name="Spauschus A."/>
            <person name="Pfeil D.V."/>
            <person name="Karschin C."/>
            <person name="Karschin A."/>
        </authorList>
    </citation>
    <scope>NUCLEOTIDE SEQUENCE [MRNA]</scope>
    <scope>FUNCTION</scope>
    <scope>SUBUNIT</scope>
    <source>
        <tissue>Brain</tissue>
    </source>
</reference>
<reference key="2">
    <citation type="submission" date="1997-11" db="EMBL/GenBank/DDBJ databases">
        <authorList>
            <person name="Dissmann E."/>
            <person name="Wischmeyer E."/>
            <person name="Spauschus A."/>
            <person name="Pfeil D.V."/>
            <person name="Karschin C."/>
            <person name="Karschin A."/>
        </authorList>
    </citation>
    <scope>SEQUENCE REVISION</scope>
</reference>
<reference key="3">
    <citation type="journal article" date="2007" name="Nat. Neurosci.">
        <title>A unique sorting nexin regulates trafficking of potassium channels via a PDZ domain interaction.</title>
        <authorList>
            <person name="Lunn M.L."/>
            <person name="Nassirpour R."/>
            <person name="Arrabit C."/>
            <person name="Tan J."/>
            <person name="McLeod I."/>
            <person name="Arias C.M."/>
            <person name="Sawchenko P.E."/>
            <person name="Yates J.R. III"/>
            <person name="Slesinger P.A."/>
        </authorList>
    </citation>
    <scope>INTERACTION WITH SNX27</scope>
    <scope>MUTAGENESIS OF 390-GLU--VAL-393; LYS-392 AND VAL-393</scope>
</reference>
<reference key="4">
    <citation type="journal article" date="2011" name="Proc. Natl. Acad. Sci. U.S.A.">
        <title>Mechanism underlying selective regulation of G protein-gated inwardly rectifying potassium channels by the psychostimulant-sensitive sorting nexin 27.</title>
        <authorList>
            <person name="Balana B."/>
            <person name="Maslennikov I."/>
            <person name="Kwiatkowski W."/>
            <person name="Stern K.M."/>
            <person name="Bahima L."/>
            <person name="Choe S."/>
            <person name="Slesinger P.A."/>
        </authorList>
    </citation>
    <scope>X-RAY CRYSTALLOGRAPHY (1.68 ANGSTROMS) OF 388-393 IN COMPLEX WITH SNX27</scope>
    <scope>INTERACTION WITH SNX27</scope>
    <scope>MUTAGENESIS OF 388-GLU-SER-389</scope>
</reference>
<sequence>MAQENAAFSPGSEEPPRRRGRQRYVEKDGRCNVQQGNVRETYRYLTDLFTTLVDLQWRLSLLFFVLAYALTWLFFGAIWWLIAYGRGDLEHLEDTAWTPCVNNLNGFVAAFLFSIETETTIGYGHRVITDQCPEGIVLLLLQAILGSMVNAFMVGCMFVKISQPNKRAATLVFSSHAVVSLRDGRLCLMFRVGDLRSSHIVEASIRAKLIRSRQTLEGEFIPLHQTDLSVGFDTGDDRLFLVSPLVISHEIDAASPFWEASRRALERDDFEIVVILEGMVEATGMTCQARSSYLVDEVLWGHRFTSVLTLEDGFYEVDYASFHETFEVPTPSCSARELAEAAARLDAHLYWSIPSRLDEKVEEEGAGEGAGAGDGADKEQNGCLPPPESESKV</sequence>
<dbReference type="EMBL" id="L77929">
    <property type="protein sequence ID" value="AAB95433.1"/>
    <property type="molecule type" value="mRNA"/>
</dbReference>
<dbReference type="RefSeq" id="NP_446286.1">
    <property type="nucleotide sequence ID" value="NM_053834.2"/>
</dbReference>
<dbReference type="PDB" id="3QDO">
    <property type="method" value="X-ray"/>
    <property type="resolution" value="1.88 A"/>
    <property type="chains" value="A=388-393"/>
</dbReference>
<dbReference type="PDB" id="3QE1">
    <property type="method" value="X-ray"/>
    <property type="resolution" value="1.68 A"/>
    <property type="chains" value="A=388-393"/>
</dbReference>
<dbReference type="PDB" id="3QGL">
    <property type="method" value="X-ray"/>
    <property type="resolution" value="3.31 A"/>
    <property type="chains" value="F/G/H/I/J=388-393"/>
</dbReference>
<dbReference type="PDBsum" id="3QDO"/>
<dbReference type="PDBsum" id="3QE1"/>
<dbReference type="PDBsum" id="3QGL"/>
<dbReference type="SMR" id="Q63511"/>
<dbReference type="FunCoup" id="Q63511">
    <property type="interactions" value="300"/>
</dbReference>
<dbReference type="STRING" id="10116.ENSRNOP00000071010"/>
<dbReference type="iPTMnet" id="Q63511"/>
<dbReference type="PhosphoSitePlus" id="Q63511"/>
<dbReference type="PaxDb" id="10116-ENSRNOP00000010113"/>
<dbReference type="ABCD" id="Q63511">
    <property type="antibodies" value="1 sequenced antibody"/>
</dbReference>
<dbReference type="Ensembl" id="ENSRNOT00000010113.5">
    <property type="protein sequence ID" value="ENSRNOP00000010113.2"/>
    <property type="gene ID" value="ENSRNOG00000007645.6"/>
</dbReference>
<dbReference type="GeneID" id="116560"/>
<dbReference type="KEGG" id="rno:116560"/>
<dbReference type="AGR" id="RGD:621440"/>
<dbReference type="CTD" id="3765"/>
<dbReference type="RGD" id="621440">
    <property type="gene designation" value="Kcnj9"/>
</dbReference>
<dbReference type="eggNOG" id="KOG3827">
    <property type="taxonomic scope" value="Eukaryota"/>
</dbReference>
<dbReference type="GeneTree" id="ENSGT01080000257365"/>
<dbReference type="HOGENOM" id="CLU_022738_11_0_1"/>
<dbReference type="InParanoid" id="Q63511"/>
<dbReference type="OMA" id="RFSPMML"/>
<dbReference type="OrthoDB" id="42038at9989"/>
<dbReference type="PhylomeDB" id="Q63511"/>
<dbReference type="TreeFam" id="TF313676"/>
<dbReference type="Reactome" id="R-RNO-1296041">
    <property type="pathway name" value="Activation of G protein gated Potassium channels"/>
</dbReference>
<dbReference type="Reactome" id="R-RNO-997272">
    <property type="pathway name" value="Inhibition of voltage gated Ca2+ channels via Gbeta/gamma subunits"/>
</dbReference>
<dbReference type="EvolutionaryTrace" id="Q63511"/>
<dbReference type="PRO" id="PR:Q63511"/>
<dbReference type="Proteomes" id="UP000002494">
    <property type="component" value="Chromosome 13"/>
</dbReference>
<dbReference type="Bgee" id="ENSRNOG00000007645">
    <property type="expression patterns" value="Expressed in frontal cortex and 11 other cell types or tissues"/>
</dbReference>
<dbReference type="ExpressionAtlas" id="Q63511">
    <property type="expression patterns" value="baseline and differential"/>
</dbReference>
<dbReference type="GO" id="GO:0034702">
    <property type="term" value="C:monoatomic ion channel complex"/>
    <property type="evidence" value="ECO:0007669"/>
    <property type="project" value="UniProtKB-KW"/>
</dbReference>
<dbReference type="GO" id="GO:0098688">
    <property type="term" value="C:parallel fiber to Purkinje cell synapse"/>
    <property type="evidence" value="ECO:0000266"/>
    <property type="project" value="RGD"/>
</dbReference>
<dbReference type="GO" id="GO:0005886">
    <property type="term" value="C:plasma membrane"/>
    <property type="evidence" value="ECO:0000318"/>
    <property type="project" value="GO_Central"/>
</dbReference>
<dbReference type="GO" id="GO:0042734">
    <property type="term" value="C:presynaptic membrane"/>
    <property type="evidence" value="ECO:0000266"/>
    <property type="project" value="RGD"/>
</dbReference>
<dbReference type="GO" id="GO:0015467">
    <property type="term" value="F:G-protein activated inward rectifier potassium channel activity"/>
    <property type="evidence" value="ECO:0007669"/>
    <property type="project" value="InterPro"/>
</dbReference>
<dbReference type="GO" id="GO:0005242">
    <property type="term" value="F:inward rectifier potassium channel activity"/>
    <property type="evidence" value="ECO:0000318"/>
    <property type="project" value="GO_Central"/>
</dbReference>
<dbReference type="GO" id="GO:0030165">
    <property type="term" value="F:PDZ domain binding"/>
    <property type="evidence" value="ECO:0000353"/>
    <property type="project" value="UniProtKB"/>
</dbReference>
<dbReference type="GO" id="GO:1990573">
    <property type="term" value="P:potassium ion import across plasma membrane"/>
    <property type="evidence" value="ECO:0000318"/>
    <property type="project" value="GO_Central"/>
</dbReference>
<dbReference type="GO" id="GO:0034765">
    <property type="term" value="P:regulation of monoatomic ion transmembrane transport"/>
    <property type="evidence" value="ECO:0000318"/>
    <property type="project" value="GO_Central"/>
</dbReference>
<dbReference type="GO" id="GO:0099505">
    <property type="term" value="P:regulation of presynaptic membrane potential"/>
    <property type="evidence" value="ECO:0000266"/>
    <property type="project" value="RGD"/>
</dbReference>
<dbReference type="FunFam" id="1.10.287.70:FF:000019">
    <property type="entry name" value="G protein-activated inward rectifier potassium channel 1"/>
    <property type="match status" value="1"/>
</dbReference>
<dbReference type="FunFam" id="2.60.40.1400:FF:000001">
    <property type="entry name" value="G protein-activated inward rectifier potassium channel 2"/>
    <property type="match status" value="1"/>
</dbReference>
<dbReference type="Gene3D" id="1.10.287.70">
    <property type="match status" value="1"/>
</dbReference>
<dbReference type="Gene3D" id="2.60.40.1400">
    <property type="entry name" value="G protein-activated inward rectifier potassium channel 1"/>
    <property type="match status" value="1"/>
</dbReference>
<dbReference type="InterPro" id="IPR014756">
    <property type="entry name" value="Ig_E-set"/>
</dbReference>
<dbReference type="InterPro" id="IPR041647">
    <property type="entry name" value="IRK_C"/>
</dbReference>
<dbReference type="InterPro" id="IPR016449">
    <property type="entry name" value="K_chnl_inward-rec_Kir"/>
</dbReference>
<dbReference type="InterPro" id="IPR003276">
    <property type="entry name" value="K_chnl_inward-rec_Kir3.3"/>
</dbReference>
<dbReference type="InterPro" id="IPR013518">
    <property type="entry name" value="K_chnl_inward-rec_Kir_cyto"/>
</dbReference>
<dbReference type="InterPro" id="IPR040445">
    <property type="entry name" value="Kir_TM"/>
</dbReference>
<dbReference type="PANTHER" id="PTHR11767:SF17">
    <property type="entry name" value="G PROTEIN-ACTIVATED INWARD RECTIFIER POTASSIUM CHANNEL 3"/>
    <property type="match status" value="1"/>
</dbReference>
<dbReference type="PANTHER" id="PTHR11767">
    <property type="entry name" value="INWARD RECTIFIER POTASSIUM CHANNEL"/>
    <property type="match status" value="1"/>
</dbReference>
<dbReference type="Pfam" id="PF01007">
    <property type="entry name" value="IRK"/>
    <property type="match status" value="1"/>
</dbReference>
<dbReference type="Pfam" id="PF17655">
    <property type="entry name" value="IRK_C"/>
    <property type="match status" value="1"/>
</dbReference>
<dbReference type="PIRSF" id="PIRSF005465">
    <property type="entry name" value="GIRK_kir"/>
    <property type="match status" value="1"/>
</dbReference>
<dbReference type="PRINTS" id="PR01329">
    <property type="entry name" value="KIR33CHANNEL"/>
</dbReference>
<dbReference type="PRINTS" id="PR01320">
    <property type="entry name" value="KIRCHANNEL"/>
</dbReference>
<dbReference type="SUPFAM" id="SSF81296">
    <property type="entry name" value="E set domains"/>
    <property type="match status" value="1"/>
</dbReference>
<dbReference type="SUPFAM" id="SSF81324">
    <property type="entry name" value="Voltage-gated potassium channels"/>
    <property type="match status" value="1"/>
</dbReference>
<comment type="function">
    <text evidence="8">This receptor is controlled by G proteins. Inward rectifier potassium channels are characterized by a greater tendency to allow potassium to flow into the cell rather than out of it. Their voltage dependence is regulated by the concentration of extracellular potassium; as external potassium is raised, the voltage range of the channel opening shifts to more positive voltages. The inward rectification is mainly due to the blockage of outward current by internal magnesium. Unable to produce channel activity when expressed alone but forms a functional channel in association with KCNJ3/GIRK1.</text>
</comment>
<comment type="catalytic activity">
    <reaction evidence="3">
        <text>K(+)(in) = K(+)(out)</text>
        <dbReference type="Rhea" id="RHEA:29463"/>
        <dbReference type="ChEBI" id="CHEBI:29103"/>
    </reaction>
</comment>
<comment type="subunit">
    <text evidence="2 6 7 8">Associates with KCNJ3/GIRK1 to form a G-protein-activated heteromultimer pore-forming unit (PubMed:8670306). Interacts (via PDZ-binding motif) with SNX27 (via PDZ domain); the interaction is required when endocytosed to prevent degradation in lysosomes and promote recycling to the plasma membrane (PubMed:17828261, PubMed:21422294).</text>
</comment>
<comment type="subcellular location">
    <subcellularLocation>
        <location evidence="4">Membrane</location>
        <topology evidence="4">Multi-pass membrane protein</topology>
    </subcellularLocation>
</comment>
<comment type="domain">
    <text evidence="6 7">The PDZ-binding motif specifically binds the PDZ domain of SNX27: the specificity for SNX27 is provided by the 2 residues located upstream (Glu-388 and Ser-389) of the PDZ-binding motif (PubMed:17828261, PubMed:21422294).</text>
</comment>
<comment type="similarity">
    <text evidence="9">Belongs to the inward rectifier-type potassium channel (TC 1.A.2.1) family. KCNJ9 subfamily.</text>
</comment>
<name>KCNJ9_RAT</name>